<reference key="1">
    <citation type="journal article" date="2008" name="J. Bacteriol.">
        <title>Genome sequence of Lactobacillus helveticus: an organism distinguished by selective gene loss and IS element expansion.</title>
        <authorList>
            <person name="Callanan M."/>
            <person name="Kaleta P."/>
            <person name="O'Callaghan J."/>
            <person name="O'Sullivan O."/>
            <person name="Jordan K."/>
            <person name="McAuliffe O."/>
            <person name="Sangrador-Vegas A."/>
            <person name="Slattery L."/>
            <person name="Fitzgerald G.F."/>
            <person name="Beresford T."/>
            <person name="Ross R.P."/>
        </authorList>
    </citation>
    <scope>NUCLEOTIDE SEQUENCE [LARGE SCALE GENOMIC DNA]</scope>
    <source>
        <strain>DPC 4571</strain>
    </source>
</reference>
<comment type="function">
    <text evidence="1">Produces ATP from ADP in the presence of a proton gradient across the membrane. The gamma chain is believed to be important in regulating ATPase activity and the flow of protons through the CF(0) complex.</text>
</comment>
<comment type="subunit">
    <text evidence="1">F-type ATPases have 2 components, CF(1) - the catalytic core - and CF(0) - the membrane proton channel. CF(1) has five subunits: alpha(3), beta(3), gamma(1), delta(1), epsilon(1). CF(0) has three main subunits: a, b and c.</text>
</comment>
<comment type="subcellular location">
    <subcellularLocation>
        <location evidence="1">Cell membrane</location>
        <topology evidence="1">Peripheral membrane protein</topology>
    </subcellularLocation>
</comment>
<comment type="similarity">
    <text evidence="1">Belongs to the ATPase gamma chain family.</text>
</comment>
<accession>A8YUK0</accession>
<feature type="chain" id="PRO_1000072861" description="ATP synthase gamma chain">
    <location>
        <begin position="1"/>
        <end position="320"/>
    </location>
</feature>
<proteinExistence type="inferred from homology"/>
<evidence type="ECO:0000255" key="1">
    <source>
        <dbReference type="HAMAP-Rule" id="MF_00815"/>
    </source>
</evidence>
<gene>
    <name evidence="1" type="primary">atpG</name>
    <name type="ordered locus">lhv_0811</name>
</gene>
<protein>
    <recommendedName>
        <fullName evidence="1">ATP synthase gamma chain</fullName>
    </recommendedName>
    <alternativeName>
        <fullName evidence="1">ATP synthase F1 sector gamma subunit</fullName>
    </alternativeName>
    <alternativeName>
        <fullName evidence="1">F-ATPase gamma subunit</fullName>
    </alternativeName>
</protein>
<dbReference type="EMBL" id="CP000517">
    <property type="protein sequence ID" value="ABX26938.1"/>
    <property type="molecule type" value="Genomic_DNA"/>
</dbReference>
<dbReference type="RefSeq" id="WP_012211672.1">
    <property type="nucleotide sequence ID" value="NC_010080.1"/>
</dbReference>
<dbReference type="SMR" id="A8YUK0"/>
<dbReference type="KEGG" id="lhe:lhv_0811"/>
<dbReference type="eggNOG" id="COG0224">
    <property type="taxonomic scope" value="Bacteria"/>
</dbReference>
<dbReference type="HOGENOM" id="CLU_050669_0_1_9"/>
<dbReference type="Proteomes" id="UP000000790">
    <property type="component" value="Chromosome"/>
</dbReference>
<dbReference type="GO" id="GO:0005886">
    <property type="term" value="C:plasma membrane"/>
    <property type="evidence" value="ECO:0007669"/>
    <property type="project" value="UniProtKB-SubCell"/>
</dbReference>
<dbReference type="GO" id="GO:0045259">
    <property type="term" value="C:proton-transporting ATP synthase complex"/>
    <property type="evidence" value="ECO:0007669"/>
    <property type="project" value="UniProtKB-KW"/>
</dbReference>
<dbReference type="GO" id="GO:0005524">
    <property type="term" value="F:ATP binding"/>
    <property type="evidence" value="ECO:0007669"/>
    <property type="project" value="UniProtKB-UniRule"/>
</dbReference>
<dbReference type="GO" id="GO:0046933">
    <property type="term" value="F:proton-transporting ATP synthase activity, rotational mechanism"/>
    <property type="evidence" value="ECO:0007669"/>
    <property type="project" value="UniProtKB-UniRule"/>
</dbReference>
<dbReference type="GO" id="GO:0042777">
    <property type="term" value="P:proton motive force-driven plasma membrane ATP synthesis"/>
    <property type="evidence" value="ECO:0007669"/>
    <property type="project" value="UniProtKB-UniRule"/>
</dbReference>
<dbReference type="CDD" id="cd12151">
    <property type="entry name" value="F1-ATPase_gamma"/>
    <property type="match status" value="1"/>
</dbReference>
<dbReference type="Gene3D" id="3.40.1380.10">
    <property type="match status" value="1"/>
</dbReference>
<dbReference type="Gene3D" id="1.10.287.80">
    <property type="entry name" value="ATP synthase, gamma subunit, helix hairpin domain"/>
    <property type="match status" value="2"/>
</dbReference>
<dbReference type="HAMAP" id="MF_00815">
    <property type="entry name" value="ATP_synth_gamma_bact"/>
    <property type="match status" value="1"/>
</dbReference>
<dbReference type="InterPro" id="IPR035968">
    <property type="entry name" value="ATP_synth_F1_ATPase_gsu"/>
</dbReference>
<dbReference type="InterPro" id="IPR000131">
    <property type="entry name" value="ATP_synth_F1_gsu"/>
</dbReference>
<dbReference type="InterPro" id="IPR023632">
    <property type="entry name" value="ATP_synth_F1_gsu_CS"/>
</dbReference>
<dbReference type="NCBIfam" id="TIGR01146">
    <property type="entry name" value="ATPsyn_F1gamma"/>
    <property type="match status" value="1"/>
</dbReference>
<dbReference type="NCBIfam" id="NF004147">
    <property type="entry name" value="PRK05621.2-1"/>
    <property type="match status" value="1"/>
</dbReference>
<dbReference type="PANTHER" id="PTHR11693">
    <property type="entry name" value="ATP SYNTHASE GAMMA CHAIN"/>
    <property type="match status" value="1"/>
</dbReference>
<dbReference type="PANTHER" id="PTHR11693:SF22">
    <property type="entry name" value="ATP SYNTHASE SUBUNIT GAMMA, MITOCHONDRIAL"/>
    <property type="match status" value="1"/>
</dbReference>
<dbReference type="Pfam" id="PF00231">
    <property type="entry name" value="ATP-synt"/>
    <property type="match status" value="1"/>
</dbReference>
<dbReference type="PRINTS" id="PR00126">
    <property type="entry name" value="ATPASEGAMMA"/>
</dbReference>
<dbReference type="SUPFAM" id="SSF52943">
    <property type="entry name" value="ATP synthase (F1-ATPase), gamma subunit"/>
    <property type="match status" value="1"/>
</dbReference>
<dbReference type="PROSITE" id="PS00153">
    <property type="entry name" value="ATPASE_GAMMA"/>
    <property type="match status" value="1"/>
</dbReference>
<sequence length="320" mass="35435">MPASLLELKKKIASVKQTGKITEAMRMVSASKLNQTEDRDKGYTIYNNHVRKTISRLISSQVVDSLREQDVAIDKRNIAKIDYTDVFGLGITADMIQPRKNIKSTGFLVVSGDRGLVGSYNSNVIKNMMGIFEDERAQGHDVKVLAVGSVGAQFFKKNNVNVVYEKNGVSDVPTFDEVLPIVSTAIKMFLNGVFDQLYVCYTHHVNSLSSAFRVEKMLPIVDLDIGVKEAEAHRELEYDIEPDPNRVLMKLLPQYARSTIYGAILDAKTAEHASSMTAMQSATDNAKDLVSNLTTKLNRARQAQITTEITEIISGANALE</sequence>
<name>ATPG_LACH4</name>
<organism>
    <name type="scientific">Lactobacillus helveticus (strain DPC 4571)</name>
    <dbReference type="NCBI Taxonomy" id="405566"/>
    <lineage>
        <taxon>Bacteria</taxon>
        <taxon>Bacillati</taxon>
        <taxon>Bacillota</taxon>
        <taxon>Bacilli</taxon>
        <taxon>Lactobacillales</taxon>
        <taxon>Lactobacillaceae</taxon>
        <taxon>Lactobacillus</taxon>
    </lineage>
</organism>
<keyword id="KW-0066">ATP synthesis</keyword>
<keyword id="KW-1003">Cell membrane</keyword>
<keyword id="KW-0139">CF(1)</keyword>
<keyword id="KW-0375">Hydrogen ion transport</keyword>
<keyword id="KW-0406">Ion transport</keyword>
<keyword id="KW-0472">Membrane</keyword>
<keyword id="KW-0813">Transport</keyword>